<dbReference type="EC" id="4.1.1.11" evidence="1"/>
<dbReference type="EMBL" id="AE017194">
    <property type="protein sequence ID" value="AAS40599.1"/>
    <property type="molecule type" value="Genomic_DNA"/>
</dbReference>
<dbReference type="SMR" id="Q73AV2"/>
<dbReference type="KEGG" id="bca:BCE_1670"/>
<dbReference type="HOGENOM" id="CLU_115305_2_0_9"/>
<dbReference type="UniPathway" id="UPA00028">
    <property type="reaction ID" value="UER00002"/>
</dbReference>
<dbReference type="Proteomes" id="UP000002527">
    <property type="component" value="Chromosome"/>
</dbReference>
<dbReference type="GO" id="GO:0005829">
    <property type="term" value="C:cytosol"/>
    <property type="evidence" value="ECO:0007669"/>
    <property type="project" value="TreeGrafter"/>
</dbReference>
<dbReference type="GO" id="GO:0004068">
    <property type="term" value="F:aspartate 1-decarboxylase activity"/>
    <property type="evidence" value="ECO:0007669"/>
    <property type="project" value="UniProtKB-UniRule"/>
</dbReference>
<dbReference type="GO" id="GO:0006523">
    <property type="term" value="P:alanine biosynthetic process"/>
    <property type="evidence" value="ECO:0007669"/>
    <property type="project" value="InterPro"/>
</dbReference>
<dbReference type="GO" id="GO:0015940">
    <property type="term" value="P:pantothenate biosynthetic process"/>
    <property type="evidence" value="ECO:0007669"/>
    <property type="project" value="UniProtKB-UniRule"/>
</dbReference>
<dbReference type="CDD" id="cd06919">
    <property type="entry name" value="Asp_decarbox"/>
    <property type="match status" value="1"/>
</dbReference>
<dbReference type="Gene3D" id="2.40.40.20">
    <property type="match status" value="1"/>
</dbReference>
<dbReference type="HAMAP" id="MF_00446">
    <property type="entry name" value="PanD"/>
    <property type="match status" value="1"/>
</dbReference>
<dbReference type="InterPro" id="IPR009010">
    <property type="entry name" value="Asp_de-COase-like_dom_sf"/>
</dbReference>
<dbReference type="InterPro" id="IPR003190">
    <property type="entry name" value="Asp_decarbox"/>
</dbReference>
<dbReference type="NCBIfam" id="TIGR00223">
    <property type="entry name" value="panD"/>
    <property type="match status" value="1"/>
</dbReference>
<dbReference type="PANTHER" id="PTHR21012">
    <property type="entry name" value="ASPARTATE 1-DECARBOXYLASE"/>
    <property type="match status" value="1"/>
</dbReference>
<dbReference type="PANTHER" id="PTHR21012:SF0">
    <property type="entry name" value="ASPARTATE 1-DECARBOXYLASE"/>
    <property type="match status" value="1"/>
</dbReference>
<dbReference type="Pfam" id="PF02261">
    <property type="entry name" value="Asp_decarbox"/>
    <property type="match status" value="1"/>
</dbReference>
<dbReference type="PIRSF" id="PIRSF006246">
    <property type="entry name" value="Asp_decarbox"/>
    <property type="match status" value="1"/>
</dbReference>
<dbReference type="SUPFAM" id="SSF50692">
    <property type="entry name" value="ADC-like"/>
    <property type="match status" value="1"/>
</dbReference>
<gene>
    <name evidence="1" type="primary">panD</name>
    <name type="ordered locus">BCE_1670</name>
</gene>
<accession>Q73AV2</accession>
<sequence length="127" mass="13908">MFRTMMRAKLHRATVTEANLNYVGSITIDEDLMDAVNIVENEKVQIVNNNNGARLETYVIKGERGSGVVCLNGAAARLVQPGDKVIIICYGLVAEENIHKQEPKIAVLDDNNQIIEMLGAEKAGTIL</sequence>
<protein>
    <recommendedName>
        <fullName evidence="1">Aspartate 1-decarboxylase</fullName>
        <ecNumber evidence="1">4.1.1.11</ecNumber>
    </recommendedName>
    <alternativeName>
        <fullName evidence="1">Aspartate alpha-decarboxylase</fullName>
    </alternativeName>
    <component>
        <recommendedName>
            <fullName evidence="1">Aspartate 1-decarboxylase beta chain</fullName>
        </recommendedName>
    </component>
    <component>
        <recommendedName>
            <fullName evidence="1">Aspartate 1-decarboxylase alpha chain</fullName>
        </recommendedName>
    </component>
</protein>
<feature type="chain" id="PRO_0000023019" description="Aspartate 1-decarboxylase beta chain" evidence="1">
    <location>
        <begin position="1"/>
        <end position="24"/>
    </location>
</feature>
<feature type="chain" id="PRO_0000023020" description="Aspartate 1-decarboxylase alpha chain" evidence="1">
    <location>
        <begin position="25"/>
        <end position="127"/>
    </location>
</feature>
<feature type="active site" description="Schiff-base intermediate with substrate; via pyruvic acid" evidence="1">
    <location>
        <position position="25"/>
    </location>
</feature>
<feature type="active site" description="Proton donor" evidence="1">
    <location>
        <position position="58"/>
    </location>
</feature>
<feature type="binding site" evidence="1">
    <location>
        <position position="57"/>
    </location>
    <ligand>
        <name>substrate</name>
    </ligand>
</feature>
<feature type="binding site" evidence="1">
    <location>
        <begin position="73"/>
        <end position="75"/>
    </location>
    <ligand>
        <name>substrate</name>
    </ligand>
</feature>
<feature type="modified residue" description="Pyruvic acid (Ser)" evidence="1">
    <location>
        <position position="25"/>
    </location>
</feature>
<evidence type="ECO:0000255" key="1">
    <source>
        <dbReference type="HAMAP-Rule" id="MF_00446"/>
    </source>
</evidence>
<name>PAND_BACC1</name>
<reference key="1">
    <citation type="journal article" date="2004" name="Nucleic Acids Res.">
        <title>The genome sequence of Bacillus cereus ATCC 10987 reveals metabolic adaptations and a large plasmid related to Bacillus anthracis pXO1.</title>
        <authorList>
            <person name="Rasko D.A."/>
            <person name="Ravel J."/>
            <person name="Oekstad O.A."/>
            <person name="Helgason E."/>
            <person name="Cer R.Z."/>
            <person name="Jiang L."/>
            <person name="Shores K.A."/>
            <person name="Fouts D.E."/>
            <person name="Tourasse N.J."/>
            <person name="Angiuoli S.V."/>
            <person name="Kolonay J.F."/>
            <person name="Nelson W.C."/>
            <person name="Kolstoe A.-B."/>
            <person name="Fraser C.M."/>
            <person name="Read T.D."/>
        </authorList>
    </citation>
    <scope>NUCLEOTIDE SEQUENCE [LARGE SCALE GENOMIC DNA]</scope>
    <source>
        <strain>ATCC 10987 / NRS 248</strain>
    </source>
</reference>
<keyword id="KW-0068">Autocatalytic cleavage</keyword>
<keyword id="KW-0963">Cytoplasm</keyword>
<keyword id="KW-0210">Decarboxylase</keyword>
<keyword id="KW-0456">Lyase</keyword>
<keyword id="KW-0566">Pantothenate biosynthesis</keyword>
<keyword id="KW-0670">Pyruvate</keyword>
<keyword id="KW-0704">Schiff base</keyword>
<keyword id="KW-0865">Zymogen</keyword>
<comment type="function">
    <text evidence="1">Catalyzes the pyruvoyl-dependent decarboxylation of aspartate to produce beta-alanine.</text>
</comment>
<comment type="catalytic activity">
    <reaction evidence="1">
        <text>L-aspartate + H(+) = beta-alanine + CO2</text>
        <dbReference type="Rhea" id="RHEA:19497"/>
        <dbReference type="ChEBI" id="CHEBI:15378"/>
        <dbReference type="ChEBI" id="CHEBI:16526"/>
        <dbReference type="ChEBI" id="CHEBI:29991"/>
        <dbReference type="ChEBI" id="CHEBI:57966"/>
        <dbReference type="EC" id="4.1.1.11"/>
    </reaction>
</comment>
<comment type="cofactor">
    <cofactor evidence="1">
        <name>pyruvate</name>
        <dbReference type="ChEBI" id="CHEBI:15361"/>
    </cofactor>
    <text evidence="1">Binds 1 pyruvoyl group covalently per subunit.</text>
</comment>
<comment type="pathway">
    <text evidence="1">Cofactor biosynthesis; (R)-pantothenate biosynthesis; beta-alanine from L-aspartate: step 1/1.</text>
</comment>
<comment type="subunit">
    <text evidence="1">Heterooctamer of four alpha and four beta subunits.</text>
</comment>
<comment type="subcellular location">
    <subcellularLocation>
        <location evidence="1">Cytoplasm</location>
    </subcellularLocation>
</comment>
<comment type="PTM">
    <text evidence="1">Is synthesized initially as an inactive proenzyme, which is activated by self-cleavage at a specific serine bond to produce a beta-subunit with a hydroxyl group at its C-terminus and an alpha-subunit with a pyruvoyl group at its N-terminus.</text>
</comment>
<comment type="similarity">
    <text evidence="1">Belongs to the PanD family.</text>
</comment>
<organism>
    <name type="scientific">Bacillus cereus (strain ATCC 10987 / NRS 248)</name>
    <dbReference type="NCBI Taxonomy" id="222523"/>
    <lineage>
        <taxon>Bacteria</taxon>
        <taxon>Bacillati</taxon>
        <taxon>Bacillota</taxon>
        <taxon>Bacilli</taxon>
        <taxon>Bacillales</taxon>
        <taxon>Bacillaceae</taxon>
        <taxon>Bacillus</taxon>
        <taxon>Bacillus cereus group</taxon>
    </lineage>
</organism>
<proteinExistence type="inferred from homology"/>